<dbReference type="EMBL" id="CP000048">
    <property type="protein sequence ID" value="AAX17344.1"/>
    <property type="molecule type" value="Genomic_DNA"/>
</dbReference>
<dbReference type="RefSeq" id="WP_012422594.1">
    <property type="nucleotide sequence ID" value="NZ_CP073136.1"/>
</dbReference>
<dbReference type="SMR" id="B2S1C8"/>
<dbReference type="KEGG" id="bhr:BH0786"/>
<dbReference type="HOGENOM" id="CLU_075939_0_1_12"/>
<dbReference type="Proteomes" id="UP000008834">
    <property type="component" value="Chromosome"/>
</dbReference>
<dbReference type="GO" id="GO:0022625">
    <property type="term" value="C:cytosolic large ribosomal subunit"/>
    <property type="evidence" value="ECO:0007669"/>
    <property type="project" value="TreeGrafter"/>
</dbReference>
<dbReference type="GO" id="GO:0008097">
    <property type="term" value="F:5S rRNA binding"/>
    <property type="evidence" value="ECO:0007669"/>
    <property type="project" value="InterPro"/>
</dbReference>
<dbReference type="GO" id="GO:0003735">
    <property type="term" value="F:structural constituent of ribosome"/>
    <property type="evidence" value="ECO:0007669"/>
    <property type="project" value="InterPro"/>
</dbReference>
<dbReference type="GO" id="GO:0006412">
    <property type="term" value="P:translation"/>
    <property type="evidence" value="ECO:0007669"/>
    <property type="project" value="UniProtKB-UniRule"/>
</dbReference>
<dbReference type="CDD" id="cd00495">
    <property type="entry name" value="Ribosomal_L25_TL5_CTC"/>
    <property type="match status" value="1"/>
</dbReference>
<dbReference type="Gene3D" id="2.170.120.20">
    <property type="entry name" value="Ribosomal protein L25, beta domain"/>
    <property type="match status" value="1"/>
</dbReference>
<dbReference type="Gene3D" id="2.40.240.10">
    <property type="entry name" value="Ribosomal Protein L25, Chain P"/>
    <property type="match status" value="1"/>
</dbReference>
<dbReference type="HAMAP" id="MF_01334">
    <property type="entry name" value="Ribosomal_bL25_CTC"/>
    <property type="match status" value="1"/>
</dbReference>
<dbReference type="InterPro" id="IPR020056">
    <property type="entry name" value="Rbsml_bL25/Gln-tRNA_synth_N"/>
</dbReference>
<dbReference type="InterPro" id="IPR011035">
    <property type="entry name" value="Ribosomal_bL25/Gln-tRNA_synth"/>
</dbReference>
<dbReference type="InterPro" id="IPR020057">
    <property type="entry name" value="Ribosomal_bL25_b-dom"/>
</dbReference>
<dbReference type="InterPro" id="IPR037121">
    <property type="entry name" value="Ribosomal_bL25_C"/>
</dbReference>
<dbReference type="InterPro" id="IPR001021">
    <property type="entry name" value="Ribosomal_bL25_long"/>
</dbReference>
<dbReference type="InterPro" id="IPR029751">
    <property type="entry name" value="Ribosomal_L25_dom"/>
</dbReference>
<dbReference type="InterPro" id="IPR020930">
    <property type="entry name" value="Ribosomal_uL5_bac-type"/>
</dbReference>
<dbReference type="NCBIfam" id="TIGR00731">
    <property type="entry name" value="bL25_bact_ctc"/>
    <property type="match status" value="1"/>
</dbReference>
<dbReference type="NCBIfam" id="NF004135">
    <property type="entry name" value="PRK05618.3-1"/>
    <property type="match status" value="1"/>
</dbReference>
<dbReference type="PANTHER" id="PTHR33284">
    <property type="entry name" value="RIBOSOMAL PROTEIN L25/GLN-TRNA SYNTHETASE, ANTI-CODON-BINDING DOMAIN-CONTAINING PROTEIN"/>
    <property type="match status" value="1"/>
</dbReference>
<dbReference type="PANTHER" id="PTHR33284:SF1">
    <property type="entry name" value="RIBOSOMAL PROTEIN L25_GLN-TRNA SYNTHETASE, ANTI-CODON-BINDING DOMAIN-CONTAINING PROTEIN"/>
    <property type="match status" value="1"/>
</dbReference>
<dbReference type="Pfam" id="PF01386">
    <property type="entry name" value="Ribosomal_L25p"/>
    <property type="match status" value="1"/>
</dbReference>
<dbReference type="Pfam" id="PF14693">
    <property type="entry name" value="Ribosomal_TL5_C"/>
    <property type="match status" value="1"/>
</dbReference>
<dbReference type="SUPFAM" id="SSF50715">
    <property type="entry name" value="Ribosomal protein L25-like"/>
    <property type="match status" value="1"/>
</dbReference>
<accession>B2S1C8</accession>
<protein>
    <recommendedName>
        <fullName evidence="1">Large ribosomal subunit protein bL25</fullName>
    </recommendedName>
    <alternativeName>
        <fullName evidence="2">50S ribosomal protein L25</fullName>
    </alternativeName>
    <alternativeName>
        <fullName evidence="1">General stress protein CTC</fullName>
    </alternativeName>
</protein>
<reference key="1">
    <citation type="submission" date="2004-12" db="EMBL/GenBank/DDBJ databases">
        <title>The genome sequence of Borrelia hermsii and Borrelia turicatae: comparative analysis of two agents of endemic N. America relapsing fever.</title>
        <authorList>
            <person name="Porcella S.F."/>
            <person name="Raffel S.J."/>
            <person name="Schrumpf M.E."/>
            <person name="Montgomery B."/>
            <person name="Smith T."/>
            <person name="Schwan T.G."/>
        </authorList>
    </citation>
    <scope>NUCLEOTIDE SEQUENCE [LARGE SCALE GENOMIC DNA]</scope>
    <source>
        <strain>HS1 / DAH</strain>
    </source>
</reference>
<name>RL25_BORHD</name>
<proteinExistence type="inferred from homology"/>
<evidence type="ECO:0000255" key="1">
    <source>
        <dbReference type="HAMAP-Rule" id="MF_01334"/>
    </source>
</evidence>
<evidence type="ECO:0000305" key="2"/>
<feature type="chain" id="PRO_1000142491" description="Large ribosomal subunit protein bL25">
    <location>
        <begin position="1"/>
        <end position="182"/>
    </location>
</feature>
<sequence>MDSSRILRYEGRLDFGSLRARRIRAESEIPAVVYGKESDVLHIKIKSSEFNNKFAKFTDNTVLILSDGKIEKCVFIKDVSENLTKRLIYHVDFYEVDKTKDIERDIAIKFVGASVGVKEGGTLSVLRTKIKVKSLPLNLPEFVEVDLTPVKKGDQVTFKDIVLPDNVKLSEENENSVVLLVK</sequence>
<organism>
    <name type="scientific">Borrelia hermsii (strain HS1 / DAH)</name>
    <dbReference type="NCBI Taxonomy" id="314723"/>
    <lineage>
        <taxon>Bacteria</taxon>
        <taxon>Pseudomonadati</taxon>
        <taxon>Spirochaetota</taxon>
        <taxon>Spirochaetia</taxon>
        <taxon>Spirochaetales</taxon>
        <taxon>Borreliaceae</taxon>
        <taxon>Borrelia</taxon>
    </lineage>
</organism>
<gene>
    <name evidence="1" type="primary">rplY</name>
    <name evidence="1" type="synonym">ctc</name>
    <name type="ordered locus">BH0786</name>
</gene>
<keyword id="KW-0687">Ribonucleoprotein</keyword>
<keyword id="KW-0689">Ribosomal protein</keyword>
<keyword id="KW-0694">RNA-binding</keyword>
<keyword id="KW-0699">rRNA-binding</keyword>
<comment type="function">
    <text evidence="1">This is one of the proteins that binds to the 5S RNA in the ribosome where it forms part of the central protuberance.</text>
</comment>
<comment type="subunit">
    <text evidence="1">Part of the 50S ribosomal subunit; part of the 5S rRNA/L5/L18/L25 subcomplex. Contacts the 5S rRNA. Binds to the 5S rRNA independently of L5 and L18.</text>
</comment>
<comment type="similarity">
    <text evidence="1">Belongs to the bacterial ribosomal protein bL25 family. CTC subfamily.</text>
</comment>